<organism>
    <name type="scientific">Chironomus tentans</name>
    <name type="common">Midge</name>
    <name type="synonym">Camptochironomus tentans</name>
    <dbReference type="NCBI Taxonomy" id="7153"/>
    <lineage>
        <taxon>Eukaryota</taxon>
        <taxon>Metazoa</taxon>
        <taxon>Ecdysozoa</taxon>
        <taxon>Arthropoda</taxon>
        <taxon>Hexapoda</taxon>
        <taxon>Insecta</taxon>
        <taxon>Pterygota</taxon>
        <taxon>Neoptera</taxon>
        <taxon>Endopterygota</taxon>
        <taxon>Diptera</taxon>
        <taxon>Nematocera</taxon>
        <taxon>Chironomoidea</taxon>
        <taxon>Chironomidae</taxon>
        <taxon>Chironominae</taxon>
        <taxon>Chironomus</taxon>
    </lineage>
</organism>
<feature type="chain" id="PRO_0000064825" description="Balbiani ring protein 2">
    <location>
        <begin position="1" status="less than"/>
        <end position="210" status="greater than"/>
    </location>
</feature>
<feature type="repeat" description="1-1">
    <location>
        <begin position="1"/>
        <end position="3"/>
    </location>
</feature>
<feature type="repeat" description="1-2">
    <location>
        <begin position="4"/>
        <end position="6"/>
    </location>
</feature>
<feature type="repeat" description="1-3">
    <location>
        <begin position="7"/>
        <end position="9"/>
    </location>
</feature>
<feature type="repeat" description="1-4">
    <location>
        <begin position="10"/>
        <end position="12"/>
    </location>
</feature>
<feature type="repeat" description="1-5">
    <location>
        <begin position="13"/>
        <end position="15"/>
    </location>
</feature>
<feature type="repeat" description="1-6">
    <location>
        <begin position="16"/>
        <end position="18"/>
    </location>
</feature>
<feature type="repeat" description="1-7">
    <location>
        <begin position="19"/>
        <end position="21"/>
    </location>
</feature>
<feature type="repeat" description="1-8">
    <location>
        <begin position="22"/>
        <end position="24"/>
    </location>
</feature>
<feature type="repeat" description="1-9">
    <location>
        <begin position="25"/>
        <end position="27"/>
    </location>
</feature>
<feature type="repeat" description="2-1">
    <location>
        <begin position="63"/>
        <end position="65"/>
    </location>
</feature>
<feature type="repeat" description="2-2">
    <location>
        <begin position="66"/>
        <end position="68"/>
    </location>
</feature>
<feature type="repeat" description="2-3">
    <location>
        <begin position="69"/>
        <end position="71"/>
    </location>
</feature>
<feature type="repeat" description="2-4">
    <location>
        <begin position="72"/>
        <end position="74"/>
    </location>
</feature>
<feature type="repeat" description="2-5">
    <location>
        <begin position="75"/>
        <end position="77"/>
    </location>
</feature>
<feature type="repeat" description="2-6">
    <location>
        <begin position="78"/>
        <end position="80"/>
    </location>
</feature>
<feature type="repeat" description="2-7">
    <location>
        <begin position="81"/>
        <end position="83"/>
    </location>
</feature>
<feature type="repeat" description="2-8">
    <location>
        <begin position="84"/>
        <end position="86"/>
    </location>
</feature>
<feature type="repeat" description="2-9">
    <location>
        <begin position="87"/>
        <end position="89"/>
    </location>
</feature>
<feature type="repeat" description="2-10">
    <location>
        <begin position="90"/>
        <end position="92"/>
    </location>
</feature>
<feature type="repeat" description="2-11">
    <location>
        <begin position="93"/>
        <end position="95"/>
    </location>
</feature>
<feature type="repeat" description="2-12">
    <location>
        <begin position="96"/>
        <end position="98"/>
    </location>
</feature>
<feature type="repeat" description="2-13">
    <location>
        <begin position="99"/>
        <end position="101"/>
    </location>
</feature>
<feature type="repeat" description="3-1">
    <location>
        <begin position="137"/>
        <end position="139"/>
    </location>
</feature>
<feature type="repeat" description="3-2">
    <location>
        <begin position="140"/>
        <end position="142"/>
    </location>
</feature>
<feature type="repeat" description="3-3">
    <location>
        <begin position="143"/>
        <end position="145"/>
    </location>
</feature>
<feature type="repeat" description="3-4">
    <location>
        <begin position="146"/>
        <end position="148"/>
    </location>
</feature>
<feature type="repeat" description="3-5">
    <location>
        <begin position="149"/>
        <end position="151"/>
    </location>
</feature>
<feature type="repeat" description="3-6">
    <location>
        <begin position="152"/>
        <end position="154"/>
    </location>
</feature>
<feature type="repeat" description="3-7">
    <location>
        <begin position="155"/>
        <end position="157"/>
    </location>
</feature>
<feature type="repeat" description="3-8">
    <location>
        <begin position="158"/>
        <end position="160"/>
    </location>
</feature>
<feature type="repeat" description="3-9">
    <location>
        <begin position="161"/>
        <end position="163"/>
    </location>
</feature>
<feature type="repeat" description="3-10">
    <location>
        <begin position="164"/>
        <end position="166"/>
    </location>
</feature>
<feature type="repeat" description="3-11">
    <location>
        <begin position="167"/>
        <end position="169"/>
    </location>
</feature>
<feature type="repeat" description="4-1">
    <location>
        <begin position="205"/>
        <end position="207"/>
    </location>
</feature>
<feature type="repeat" description="4-2">
    <location>
        <begin position="208"/>
        <end position="210"/>
    </location>
</feature>
<feature type="region of interest" description="Disordered" evidence="1">
    <location>
        <begin position="1"/>
        <end position="210"/>
    </location>
</feature>
<feature type="region of interest" description="9 X 3 AA tandem repeats of S-K-[HP]">
    <location>
        <begin position="1"/>
        <end position="27"/>
    </location>
</feature>
<feature type="region of interest" description="13 X 3 AA tandem repeats of S-K-[HP]">
    <location>
        <begin position="63"/>
        <end position="101"/>
    </location>
</feature>
<feature type="region of interest" description="11 X 3 AA tandem repeats of S-K-[HP]">
    <location>
        <begin position="137"/>
        <end position="169"/>
    </location>
</feature>
<feature type="region of interest" description="2 X 3 AA tandem repeats of S-K-[HP]">
    <location>
        <begin position="205"/>
        <end position="210"/>
    </location>
</feature>
<feature type="compositionally biased region" description="Basic residues" evidence="1">
    <location>
        <begin position="1"/>
        <end position="24"/>
    </location>
</feature>
<feature type="compositionally biased region" description="Basic and acidic residues" evidence="1">
    <location>
        <begin position="25"/>
        <end position="41"/>
    </location>
</feature>
<feature type="compositionally biased region" description="Basic residues" evidence="1">
    <location>
        <begin position="42"/>
        <end position="51"/>
    </location>
</feature>
<feature type="compositionally biased region" description="Basic residues" evidence="1">
    <location>
        <begin position="64"/>
        <end position="98"/>
    </location>
</feature>
<feature type="compositionally biased region" description="Basic and acidic residues" evidence="1">
    <location>
        <begin position="99"/>
        <end position="115"/>
    </location>
</feature>
<feature type="compositionally biased region" description="Basic residues" evidence="1">
    <location>
        <begin position="116"/>
        <end position="125"/>
    </location>
</feature>
<feature type="compositionally biased region" description="Basic residues" evidence="1">
    <location>
        <begin position="138"/>
        <end position="166"/>
    </location>
</feature>
<feature type="compositionally biased region" description="Basic and acidic residues" evidence="1">
    <location>
        <begin position="167"/>
        <end position="183"/>
    </location>
</feature>
<feature type="compositionally biased region" description="Basic residues" evidence="1">
    <location>
        <begin position="184"/>
        <end position="193"/>
    </location>
</feature>
<feature type="non-terminal residue">
    <location>
        <position position="1"/>
    </location>
</feature>
<feature type="non-terminal residue">
    <location>
        <position position="210"/>
    </location>
</feature>
<protein>
    <recommendedName>
        <fullName>Balbiani ring protein 2</fullName>
    </recommendedName>
    <alternativeName>
        <fullName>Giant secretory protein I-B</fullName>
        <shortName>GSP-IB</shortName>
    </alternativeName>
</protein>
<comment type="function">
    <text>Used by the larvae to construct a supramolecular structure, the larval tube.</text>
</comment>
<comment type="subcellular location">
    <subcellularLocation>
        <location>Secreted</location>
    </subcellularLocation>
</comment>
<comment type="tissue specificity">
    <text>Salivary gland.</text>
</comment>
<proteinExistence type="evidence at transcript level"/>
<name>BAR2_CHITE</name>
<evidence type="ECO:0000256" key="1">
    <source>
        <dbReference type="SAM" id="MobiDB-lite"/>
    </source>
</evidence>
<accession>P02851</accession>
<dbReference type="EMBL" id="V00180">
    <property type="protein sequence ID" value="CAA23476.1"/>
    <property type="molecule type" value="mRNA"/>
</dbReference>
<dbReference type="PIR" id="A03340">
    <property type="entry name" value="BQIC2"/>
</dbReference>
<dbReference type="GO" id="GO:0005576">
    <property type="term" value="C:extracellular region"/>
    <property type="evidence" value="ECO:0007669"/>
    <property type="project" value="UniProtKB-SubCell"/>
</dbReference>
<sequence>SKHSKPSKHSKHSKPSKHSKPSKHSKPEKCGSAMKRTEAAKCARKNGRFNSKRCTCTSVGKPSKPSKHSKPSKHSKPSKHSKPSKHSKPSKHSKPSKHSKPEKCGSAMKRTEAAKCARKNGRFNSKRCTCTSVGKPSKPSKHSKPSKHSKPSKHSKPSKHSKPSKHSKPEKCGSAMKRTEAAKCARKNGRFNSKRSTCNSVGKPSKPSKH</sequence>
<reference key="1">
    <citation type="journal article" date="1982" name="Cell">
        <title>A hierarchic arrangement of the repetitive sequences in the Balbiani ring 2 gene of Chironomus tentans.</title>
        <authorList>
            <person name="Sumegi J."/>
            <person name="Wieslander L."/>
            <person name="Daneholt B."/>
        </authorList>
    </citation>
    <scope>NUCLEOTIDE SEQUENCE [MRNA]</scope>
    <source>
        <tissue>Salivary gland</tissue>
    </source>
</reference>
<keyword id="KW-0677">Repeat</keyword>
<keyword id="KW-0964">Secreted</keyword>
<gene>
    <name type="primary">BR2</name>
</gene>